<name>ROT1_VANPO</name>
<evidence type="ECO:0000250" key="1"/>
<evidence type="ECO:0000255" key="2"/>
<evidence type="ECO:0000305" key="3"/>
<protein>
    <recommendedName>
        <fullName>Protein ROT1</fullName>
    </recommendedName>
</protein>
<organism>
    <name type="scientific">Vanderwaltozyma polyspora (strain ATCC 22028 / DSM 70294 / BCRC 21397 / CBS 2163 / NBRC 10782 / NRRL Y-8283 / UCD 57-17)</name>
    <name type="common">Kluyveromyces polysporus</name>
    <dbReference type="NCBI Taxonomy" id="436907"/>
    <lineage>
        <taxon>Eukaryota</taxon>
        <taxon>Fungi</taxon>
        <taxon>Dikarya</taxon>
        <taxon>Ascomycota</taxon>
        <taxon>Saccharomycotina</taxon>
        <taxon>Saccharomycetes</taxon>
        <taxon>Saccharomycetales</taxon>
        <taxon>Saccharomycetaceae</taxon>
        <taxon>Vanderwaltozyma</taxon>
    </lineage>
</organism>
<sequence length="255" mass="28325">MFGMRLLPFLANAVILFNFAIGDNDAASLSGTWSSKSNQVFTGPGFYDPVDELLIEPALPGISYSFTEDGYFEEAQYRVVANPRNIGCPQAVLIYQHGKYEILTNGTLILTPFEVDGRQLLSDPCNDDGVSTYSRYNQSETFLSFDISIDDYHGIYKLQLNQFDGSPLQPLYLAYRPPMMLPTITLNPTATNDPTDAVGKGSVSKRSLRQIVKRNLENKHKQLATKKYSGILVSPYLWYVCTGVIGVGSALFLFS</sequence>
<dbReference type="EMBL" id="DS480378">
    <property type="protein sequence ID" value="EDO19490.1"/>
    <property type="molecule type" value="Genomic_DNA"/>
</dbReference>
<dbReference type="RefSeq" id="XP_001647348.1">
    <property type="nucleotide sequence ID" value="XM_001647298.1"/>
</dbReference>
<dbReference type="FunCoup" id="A7TDM0">
    <property type="interactions" value="36"/>
</dbReference>
<dbReference type="STRING" id="436907.A7TDM0"/>
<dbReference type="GlyCosmos" id="A7TDM0">
    <property type="glycosylation" value="2 sites, No reported glycans"/>
</dbReference>
<dbReference type="GeneID" id="5547838"/>
<dbReference type="KEGG" id="vpo:Kpol_1018p18"/>
<dbReference type="eggNOG" id="ENOG502QQTG">
    <property type="taxonomic scope" value="Eukaryota"/>
</dbReference>
<dbReference type="HOGENOM" id="CLU_071622_0_0_1"/>
<dbReference type="InParanoid" id="A7TDM0"/>
<dbReference type="OMA" id="YKPPQML"/>
<dbReference type="OrthoDB" id="5327821at2759"/>
<dbReference type="PhylomeDB" id="A7TDM0"/>
<dbReference type="Proteomes" id="UP000000267">
    <property type="component" value="Unassembled WGS sequence"/>
</dbReference>
<dbReference type="GO" id="GO:0005789">
    <property type="term" value="C:endoplasmic reticulum membrane"/>
    <property type="evidence" value="ECO:0007669"/>
    <property type="project" value="UniProtKB-SubCell"/>
</dbReference>
<dbReference type="GO" id="GO:0051082">
    <property type="term" value="F:unfolded protein binding"/>
    <property type="evidence" value="ECO:0007669"/>
    <property type="project" value="EnsemblFungi"/>
</dbReference>
<dbReference type="GO" id="GO:0006458">
    <property type="term" value="P:'de novo' protein folding"/>
    <property type="evidence" value="ECO:0007669"/>
    <property type="project" value="EnsemblFungi"/>
</dbReference>
<dbReference type="GO" id="GO:0007118">
    <property type="term" value="P:budding cell apical bud growth"/>
    <property type="evidence" value="ECO:0007669"/>
    <property type="project" value="EnsemblFungi"/>
</dbReference>
<dbReference type="GO" id="GO:0030950">
    <property type="term" value="P:establishment or maintenance of actin cytoskeleton polarity"/>
    <property type="evidence" value="ECO:0007669"/>
    <property type="project" value="EnsemblFungi"/>
</dbReference>
<dbReference type="GO" id="GO:0009272">
    <property type="term" value="P:fungal-type cell wall biogenesis"/>
    <property type="evidence" value="ECO:0007669"/>
    <property type="project" value="EnsemblFungi"/>
</dbReference>
<dbReference type="GO" id="GO:0034975">
    <property type="term" value="P:protein folding in endoplasmic reticulum"/>
    <property type="evidence" value="ECO:0007669"/>
    <property type="project" value="EnsemblFungi"/>
</dbReference>
<dbReference type="GO" id="GO:0006487">
    <property type="term" value="P:protein N-linked glycosylation"/>
    <property type="evidence" value="ECO:0007669"/>
    <property type="project" value="EnsemblFungi"/>
</dbReference>
<dbReference type="GO" id="GO:0035269">
    <property type="term" value="P:protein O-linked mannosylation"/>
    <property type="evidence" value="ECO:0007669"/>
    <property type="project" value="EnsemblFungi"/>
</dbReference>
<dbReference type="InterPro" id="IPR019623">
    <property type="entry name" value="Rot1"/>
</dbReference>
<dbReference type="PANTHER" id="PTHR28090">
    <property type="entry name" value="PROTEIN ROT1"/>
    <property type="match status" value="1"/>
</dbReference>
<dbReference type="PANTHER" id="PTHR28090:SF1">
    <property type="entry name" value="PROTEIN ROT1"/>
    <property type="match status" value="1"/>
</dbReference>
<dbReference type="Pfam" id="PF10681">
    <property type="entry name" value="Rot1"/>
    <property type="match status" value="1"/>
</dbReference>
<dbReference type="PIRSF" id="PIRSF017290">
    <property type="entry name" value="ROT1_prd"/>
    <property type="match status" value="1"/>
</dbReference>
<keyword id="KW-0256">Endoplasmic reticulum</keyword>
<keyword id="KW-0325">Glycoprotein</keyword>
<keyword id="KW-0472">Membrane</keyword>
<keyword id="KW-1185">Reference proteome</keyword>
<keyword id="KW-0732">Signal</keyword>
<keyword id="KW-0812">Transmembrane</keyword>
<keyword id="KW-1133">Transmembrane helix</keyword>
<comment type="function">
    <text evidence="1">Required for normal levels of the cell wall 1,6-beta-glucan. Involved in a protein folding machinery chaperoning proteins acting in various physiological processes including cell wall synthesis and lysis of autophagic bodies (By similarity).</text>
</comment>
<comment type="subcellular location">
    <subcellularLocation>
        <location evidence="1">Endoplasmic reticulum membrane</location>
        <topology evidence="1">Single-pass type I membrane protein</topology>
    </subcellularLocation>
</comment>
<comment type="similarity">
    <text evidence="3">Belongs to the ROT1 family.</text>
</comment>
<proteinExistence type="inferred from homology"/>
<accession>A7TDM0</accession>
<gene>
    <name type="primary">ROT1</name>
    <name type="ORF">Kpol_1018p18</name>
</gene>
<feature type="signal peptide" evidence="2">
    <location>
        <begin position="1"/>
        <end position="22"/>
    </location>
</feature>
<feature type="chain" id="PRO_0000333418" description="Protein ROT1">
    <location>
        <begin position="23"/>
        <end position="255"/>
    </location>
</feature>
<feature type="topological domain" description="Lumenal" evidence="2">
    <location>
        <begin position="23"/>
        <end position="230"/>
    </location>
</feature>
<feature type="transmembrane region" description="Helical" evidence="2">
    <location>
        <begin position="231"/>
        <end position="251"/>
    </location>
</feature>
<feature type="topological domain" description="Cytoplasmic" evidence="2">
    <location>
        <begin position="252"/>
        <end position="255"/>
    </location>
</feature>
<feature type="glycosylation site" description="N-linked (GlcNAc...) asparagine" evidence="2">
    <location>
        <position position="105"/>
    </location>
</feature>
<feature type="glycosylation site" description="N-linked (GlcNAc...) asparagine" evidence="2">
    <location>
        <position position="137"/>
    </location>
</feature>
<reference key="1">
    <citation type="journal article" date="2007" name="Proc. Natl. Acad. Sci. U.S.A.">
        <title>Independent sorting-out of thousands of duplicated gene pairs in two yeast species descended from a whole-genome duplication.</title>
        <authorList>
            <person name="Scannell D.R."/>
            <person name="Frank A.C."/>
            <person name="Conant G.C."/>
            <person name="Byrne K.P."/>
            <person name="Woolfit M."/>
            <person name="Wolfe K.H."/>
        </authorList>
    </citation>
    <scope>NUCLEOTIDE SEQUENCE [LARGE SCALE GENOMIC DNA]</scope>
    <source>
        <strain>ATCC 22028 / DSM 70294 / BCRC 21397 / CBS 2163 / NBRC 10782 / NRRL Y-8283 / UCD 57-17</strain>
    </source>
</reference>